<sequence length="287" mass="32347">MAQKFVPEAAELCENSLKKFISLIGTVDKLLVISGAGISTESGIPDYRSKDVGLYARIAHKPIYFQDYMRSNRCRQRYWSRNFLAWPRFGQAAPNINHYALSKWEASDRFQWLITQNVDGLHLKAGSKMVTELHGSALQVKCTTCDYIESRQTYQDRLDYANPGFKEEHVAPGELAPDGDIILPLGTEKGFQIPECPSCGGLMKTDVTFFGENVNMDKVNFCYEKVNECDGILSLGTSLAVLSGFRFIHHANMKKKPIFIVNIGPTRADHMATMKLDYKISDVLKEM</sequence>
<comment type="function">
    <text evidence="1 3">NAD-dependent protein deacylase. Catalyzes the NAD-dependent hydrolysis of acyl groups from lysine residues. Plays a role in oxidative stress resistance (PubMed:23438705).</text>
</comment>
<comment type="catalytic activity">
    <reaction evidence="1">
        <text>N(6)-acetyl-L-lysyl-[protein] + NAD(+) + H2O = 2''-O-acetyl-ADP-D-ribose + nicotinamide + L-lysyl-[protein]</text>
        <dbReference type="Rhea" id="RHEA:43636"/>
        <dbReference type="Rhea" id="RHEA-COMP:9752"/>
        <dbReference type="Rhea" id="RHEA-COMP:10731"/>
        <dbReference type="ChEBI" id="CHEBI:15377"/>
        <dbReference type="ChEBI" id="CHEBI:17154"/>
        <dbReference type="ChEBI" id="CHEBI:29969"/>
        <dbReference type="ChEBI" id="CHEBI:57540"/>
        <dbReference type="ChEBI" id="CHEBI:61930"/>
        <dbReference type="ChEBI" id="CHEBI:83767"/>
        <dbReference type="EC" id="2.3.1.286"/>
    </reaction>
</comment>
<comment type="cofactor">
    <cofactor evidence="1">
        <name>Zn(2+)</name>
        <dbReference type="ChEBI" id="CHEBI:29105"/>
    </cofactor>
    <text evidence="1">Binds 1 zinc ion per subunit.</text>
</comment>
<comment type="subunit">
    <text evidence="3">Interacts with pyc-1, pcca-1 and mccc-1.</text>
</comment>
<comment type="subcellular location">
    <subcellularLocation>
        <location evidence="1">Mitochondrion matrix</location>
    </subcellularLocation>
    <subcellularLocation>
        <location evidence="3">Mitochondrion</location>
    </subcellularLocation>
</comment>
<comment type="alternative products">
    <event type="alternative splicing"/>
    <isoform>
        <id>Q20480-1</id>
        <name>a</name>
        <sequence type="displayed"/>
    </isoform>
    <isoform>
        <id>Q20480-2</id>
        <name>b</name>
        <sequence type="described" ref="VSP_043534"/>
    </isoform>
    <isoform>
        <id>Q20480-3</id>
        <name>c</name>
        <sequence type="described" ref="VSP_043533 VSP_043534"/>
    </isoform>
</comment>
<comment type="tissue specificity">
    <text evidence="3">Ubiquitously expressed with high expression in the pharynx, body wall muscles and gonad.</text>
</comment>
<comment type="developmental stage">
    <text evidence="3">Expression is first detected at the three-fold stage during embryogenesis.</text>
</comment>
<comment type="miscellaneous">
    <text evidence="1">This protein may be expected to contain an N-terminal transit peptide but none has been predicted.</text>
</comment>
<comment type="similarity">
    <text evidence="1">Belongs to the sirtuin family. Class II subfamily.</text>
</comment>
<dbReference type="EC" id="2.3.1.286" evidence="1 2"/>
<dbReference type="EMBL" id="Z50177">
    <property type="protein sequence ID" value="CBI63218.1"/>
    <property type="molecule type" value="Genomic_DNA"/>
</dbReference>
<dbReference type="EMBL" id="Z50177">
    <property type="protein sequence ID" value="CAE46663.1"/>
    <property type="molecule type" value="Genomic_DNA"/>
</dbReference>
<dbReference type="EMBL" id="Z50177">
    <property type="protein sequence ID" value="CAA90546.1"/>
    <property type="molecule type" value="Genomic_DNA"/>
</dbReference>
<dbReference type="PIR" id="T22324">
    <property type="entry name" value="T22324"/>
</dbReference>
<dbReference type="RefSeq" id="NP_001024672.1">
    <molecule id="Q20480-1"/>
    <property type="nucleotide sequence ID" value="NM_001029501.8"/>
</dbReference>
<dbReference type="RefSeq" id="NP_001024673.1">
    <property type="nucleotide sequence ID" value="NM_001029502.1"/>
</dbReference>
<dbReference type="RefSeq" id="NP_001257218.1">
    <property type="nucleotide sequence ID" value="NM_001270289.1"/>
</dbReference>
<dbReference type="RefSeq" id="NP_001367072.1">
    <molecule id="Q20480-2"/>
    <property type="nucleotide sequence ID" value="NM_001381132.3"/>
</dbReference>
<dbReference type="RefSeq" id="NP_001367227.1">
    <molecule id="Q20480-3"/>
    <property type="nucleotide sequence ID" value="NM_001381131.1"/>
</dbReference>
<dbReference type="SMR" id="Q20480"/>
<dbReference type="BioGRID" id="46358">
    <property type="interactions" value="4"/>
</dbReference>
<dbReference type="FunCoup" id="Q20480">
    <property type="interactions" value="2074"/>
</dbReference>
<dbReference type="STRING" id="6239.F46G10.7c.1"/>
<dbReference type="PaxDb" id="6239-F46G10.7c"/>
<dbReference type="PeptideAtlas" id="Q20480"/>
<dbReference type="EnsemblMetazoa" id="F46G10.7a.1">
    <molecule id="Q20480-1"/>
    <property type="protein sequence ID" value="F46G10.7a.1"/>
    <property type="gene ID" value="WBGene00004801"/>
</dbReference>
<dbReference type="EnsemblMetazoa" id="F46G10.7a.2">
    <molecule id="Q20480-1"/>
    <property type="protein sequence ID" value="F46G10.7a.2"/>
    <property type="gene ID" value="WBGene00004801"/>
</dbReference>
<dbReference type="EnsemblMetazoa" id="F46G10.7b.1">
    <molecule id="Q20480-2"/>
    <property type="protein sequence ID" value="F46G10.7b.1"/>
    <property type="gene ID" value="WBGene00004801"/>
</dbReference>
<dbReference type="EnsemblMetazoa" id="F46G10.7b.2">
    <molecule id="Q20480-2"/>
    <property type="protein sequence ID" value="F46G10.7b.2"/>
    <property type="gene ID" value="WBGene00004801"/>
</dbReference>
<dbReference type="EnsemblMetazoa" id="F46G10.7c.1">
    <molecule id="Q20480-3"/>
    <property type="protein sequence ID" value="F46G10.7c.1"/>
    <property type="gene ID" value="WBGene00004801"/>
</dbReference>
<dbReference type="GeneID" id="181455"/>
<dbReference type="KEGG" id="cel:CELE_F46G10.7"/>
<dbReference type="UCSC" id="F46G10.7a">
    <property type="organism name" value="c. elegans"/>
</dbReference>
<dbReference type="AGR" id="WB:WBGene00004801"/>
<dbReference type="CTD" id="181455"/>
<dbReference type="WormBase" id="F46G10.7a">
    <molecule id="Q20480-1"/>
    <property type="protein sequence ID" value="CE02243"/>
    <property type="gene ID" value="WBGene00004801"/>
    <property type="gene designation" value="sir-2.2"/>
</dbReference>
<dbReference type="WormBase" id="F46G10.7b">
    <molecule id="Q20480-2"/>
    <property type="protein sequence ID" value="CE35540"/>
    <property type="gene ID" value="WBGene00004801"/>
    <property type="gene designation" value="sir-2.2"/>
</dbReference>
<dbReference type="WormBase" id="F46G10.7c">
    <molecule id="Q20480-3"/>
    <property type="protein sequence ID" value="CE44321"/>
    <property type="gene ID" value="WBGene00004801"/>
    <property type="gene designation" value="sir-2.2"/>
</dbReference>
<dbReference type="eggNOG" id="KOG2683">
    <property type="taxonomic scope" value="Eukaryota"/>
</dbReference>
<dbReference type="GeneTree" id="ENSGT00940000158891"/>
<dbReference type="InParanoid" id="Q20480"/>
<dbReference type="OMA" id="RRHYWAR"/>
<dbReference type="OrthoDB" id="424302at2759"/>
<dbReference type="Reactome" id="R-CEL-204174">
    <property type="pathway name" value="Regulation of pyruvate dehydrogenase (PDH) complex"/>
</dbReference>
<dbReference type="Reactome" id="R-CEL-2151201">
    <property type="pathway name" value="Transcriptional activation of mitochondrial biogenesis"/>
</dbReference>
<dbReference type="PRO" id="PR:Q20480"/>
<dbReference type="Proteomes" id="UP000001940">
    <property type="component" value="Chromosome X"/>
</dbReference>
<dbReference type="Bgee" id="WBGene00004801">
    <property type="expression patterns" value="Expressed in larva and 3 other cell types or tissues"/>
</dbReference>
<dbReference type="GO" id="GO:0005759">
    <property type="term" value="C:mitochondrial matrix"/>
    <property type="evidence" value="ECO:0000318"/>
    <property type="project" value="GO_Central"/>
</dbReference>
<dbReference type="GO" id="GO:0005739">
    <property type="term" value="C:mitochondrion"/>
    <property type="evidence" value="ECO:0000314"/>
    <property type="project" value="WormBase"/>
</dbReference>
<dbReference type="GO" id="GO:0017136">
    <property type="term" value="F:histone deacetylase activity, NAD-dependent"/>
    <property type="evidence" value="ECO:0000318"/>
    <property type="project" value="GO_Central"/>
</dbReference>
<dbReference type="GO" id="GO:0070403">
    <property type="term" value="F:NAD+ binding"/>
    <property type="evidence" value="ECO:0000318"/>
    <property type="project" value="GO_Central"/>
</dbReference>
<dbReference type="GO" id="GO:0008270">
    <property type="term" value="F:zinc ion binding"/>
    <property type="evidence" value="ECO:0007669"/>
    <property type="project" value="UniProtKB-UniRule"/>
</dbReference>
<dbReference type="GO" id="GO:0045087">
    <property type="term" value="P:innate immune response"/>
    <property type="evidence" value="ECO:0007007"/>
    <property type="project" value="WormBase"/>
</dbReference>
<dbReference type="CDD" id="cd01409">
    <property type="entry name" value="SIRT4"/>
    <property type="match status" value="1"/>
</dbReference>
<dbReference type="Gene3D" id="3.30.1600.10">
    <property type="entry name" value="SIR2/SIRT2 'Small Domain"/>
    <property type="match status" value="1"/>
</dbReference>
<dbReference type="Gene3D" id="3.40.50.1220">
    <property type="entry name" value="TPP-binding domain"/>
    <property type="match status" value="1"/>
</dbReference>
<dbReference type="HAMAP" id="MF_01967">
    <property type="entry name" value="Sirtuin_ClassII"/>
    <property type="match status" value="1"/>
</dbReference>
<dbReference type="InterPro" id="IPR029035">
    <property type="entry name" value="DHS-like_NAD/FAD-binding_dom"/>
</dbReference>
<dbReference type="InterPro" id="IPR050134">
    <property type="entry name" value="NAD-dep_sirtuin_deacylases"/>
</dbReference>
<dbReference type="InterPro" id="IPR003000">
    <property type="entry name" value="Sirtuin"/>
</dbReference>
<dbReference type="InterPro" id="IPR026591">
    <property type="entry name" value="Sirtuin_cat_small_dom_sf"/>
</dbReference>
<dbReference type="InterPro" id="IPR026587">
    <property type="entry name" value="Sirtuin_class_II"/>
</dbReference>
<dbReference type="InterPro" id="IPR026590">
    <property type="entry name" value="Ssirtuin_cat_dom"/>
</dbReference>
<dbReference type="PANTHER" id="PTHR11085">
    <property type="entry name" value="NAD-DEPENDENT PROTEIN DEACYLASE SIRTUIN-5, MITOCHONDRIAL-RELATED"/>
    <property type="match status" value="1"/>
</dbReference>
<dbReference type="PANTHER" id="PTHR11085:SF10">
    <property type="entry name" value="NAD-DEPENDENT PROTEIN DEACYLASE SIRTUIN-5, MITOCHONDRIAL-RELATED"/>
    <property type="match status" value="1"/>
</dbReference>
<dbReference type="Pfam" id="PF02146">
    <property type="entry name" value="SIR2"/>
    <property type="match status" value="1"/>
</dbReference>
<dbReference type="SUPFAM" id="SSF52467">
    <property type="entry name" value="DHS-like NAD/FAD-binding domain"/>
    <property type="match status" value="1"/>
</dbReference>
<dbReference type="PROSITE" id="PS50305">
    <property type="entry name" value="SIRTUIN"/>
    <property type="match status" value="1"/>
</dbReference>
<gene>
    <name type="primary">sir-2.2</name>
    <name type="ORF">F46G10.7</name>
</gene>
<keyword id="KW-0025">Alternative splicing</keyword>
<keyword id="KW-0479">Metal-binding</keyword>
<keyword id="KW-0496">Mitochondrion</keyword>
<keyword id="KW-0520">NAD</keyword>
<keyword id="KW-1185">Reference proteome</keyword>
<keyword id="KW-0808">Transferase</keyword>
<keyword id="KW-0862">Zinc</keyword>
<protein>
    <recommendedName>
        <fullName evidence="1">NAD-dependent protein deacylase sir-2.2</fullName>
        <ecNumber evidence="1 2">2.3.1.286</ecNumber>
    </recommendedName>
    <alternativeName>
        <fullName evidence="1">Regulatory protein SIR2 homolog 2</fullName>
    </alternativeName>
</protein>
<feature type="chain" id="PRO_0000417345" description="NAD-dependent protein deacylase sir-2.2">
    <location>
        <begin position="1"/>
        <end position="287"/>
    </location>
</feature>
<feature type="domain" description="Deacetylase sirtuin-type" evidence="2">
    <location>
        <begin position="10"/>
        <end position="287"/>
    </location>
</feature>
<feature type="active site" description="Proton acceptor" evidence="2">
    <location>
        <position position="134"/>
    </location>
</feature>
<feature type="binding site" evidence="1">
    <location>
        <begin position="35"/>
        <end position="55"/>
    </location>
    <ligand>
        <name>NAD(+)</name>
        <dbReference type="ChEBI" id="CHEBI:57540"/>
    </ligand>
</feature>
<feature type="binding site" evidence="1">
    <location>
        <begin position="116"/>
        <end position="119"/>
    </location>
    <ligand>
        <name>NAD(+)</name>
        <dbReference type="ChEBI" id="CHEBI:57540"/>
    </ligand>
</feature>
<feature type="binding site" evidence="1">
    <location>
        <position position="142"/>
    </location>
    <ligand>
        <name>Zn(2+)</name>
        <dbReference type="ChEBI" id="CHEBI:29105"/>
    </ligand>
</feature>
<feature type="binding site" evidence="1">
    <location>
        <position position="145"/>
    </location>
    <ligand>
        <name>Zn(2+)</name>
        <dbReference type="ChEBI" id="CHEBI:29105"/>
    </ligand>
</feature>
<feature type="binding site" evidence="1">
    <location>
        <position position="196"/>
    </location>
    <ligand>
        <name>Zn(2+)</name>
        <dbReference type="ChEBI" id="CHEBI:29105"/>
    </ligand>
</feature>
<feature type="binding site" evidence="1">
    <location>
        <position position="199"/>
    </location>
    <ligand>
        <name>Zn(2+)</name>
        <dbReference type="ChEBI" id="CHEBI:29105"/>
    </ligand>
</feature>
<feature type="binding site" evidence="1">
    <location>
        <begin position="236"/>
        <end position="238"/>
    </location>
    <ligand>
        <name>NAD(+)</name>
        <dbReference type="ChEBI" id="CHEBI:57540"/>
    </ligand>
</feature>
<feature type="binding site" evidence="1">
    <location>
        <begin position="262"/>
        <end position="264"/>
    </location>
    <ligand>
        <name>NAD(+)</name>
        <dbReference type="ChEBI" id="CHEBI:57540"/>
    </ligand>
</feature>
<feature type="binding site" evidence="1">
    <location>
        <position position="280"/>
    </location>
    <ligand>
        <name>NAD(+)</name>
        <dbReference type="ChEBI" id="CHEBI:57540"/>
    </ligand>
</feature>
<feature type="splice variant" id="VSP_043533" description="In isoform c." evidence="4">
    <original>M</original>
    <variation>MMKYGM</variation>
    <location>
        <position position="1"/>
    </location>
</feature>
<feature type="splice variant" id="VSP_043534" description="In isoform b and isoform c." evidence="4">
    <original>S</original>
    <variation>SVP</variation>
    <location>
        <position position="42"/>
    </location>
</feature>
<accession>Q20480</accession>
<accession>D1MN70</accession>
<accession>Q7JMD3</accession>
<reference key="1">
    <citation type="journal article" date="1998" name="Science">
        <title>Genome sequence of the nematode C. elegans: a platform for investigating biology.</title>
        <authorList>
            <consortium name="The C. elegans sequencing consortium"/>
        </authorList>
    </citation>
    <scope>NUCLEOTIDE SEQUENCE [LARGE SCALE GENOMIC DNA]</scope>
    <source>
        <strain>Bristol N2</strain>
    </source>
</reference>
<reference key="2">
    <citation type="journal article" date="2013" name="Mitochondrion">
        <title>Mitochondrial SIRT4-type proteins in Caenorhabditis elegans and mammals interact with pyruvate carboxylase and other acetylated biotin-dependent carboxylases.</title>
        <authorList>
            <person name="Wirth M."/>
            <person name="Karaca S."/>
            <person name="Wenzel D."/>
            <person name="Ho L."/>
            <person name="Tishkoff D."/>
            <person name="Lombard D.B."/>
            <person name="Verdin E."/>
            <person name="Urlaub H."/>
            <person name="Jedrusik-Bode M."/>
            <person name="Fischle W."/>
        </authorList>
    </citation>
    <scope>FUNCTION</scope>
    <scope>INTERACTION WITH PYC-1; PCCA-1 AND MCCC-1</scope>
    <scope>SUBCELLULAR LOCATION</scope>
    <scope>TISSUE SPECIFICITY</scope>
    <scope>DEVELOPMENTAL STAGE</scope>
</reference>
<name>SIR41_CAEEL</name>
<evidence type="ECO:0000255" key="1">
    <source>
        <dbReference type="HAMAP-Rule" id="MF_03161"/>
    </source>
</evidence>
<evidence type="ECO:0000255" key="2">
    <source>
        <dbReference type="PROSITE-ProRule" id="PRU00236"/>
    </source>
</evidence>
<evidence type="ECO:0000269" key="3">
    <source>
    </source>
</evidence>
<evidence type="ECO:0000305" key="4"/>
<proteinExistence type="evidence at protein level"/>
<organism>
    <name type="scientific">Caenorhabditis elegans</name>
    <dbReference type="NCBI Taxonomy" id="6239"/>
    <lineage>
        <taxon>Eukaryota</taxon>
        <taxon>Metazoa</taxon>
        <taxon>Ecdysozoa</taxon>
        <taxon>Nematoda</taxon>
        <taxon>Chromadorea</taxon>
        <taxon>Rhabditida</taxon>
        <taxon>Rhabditina</taxon>
        <taxon>Rhabditomorpha</taxon>
        <taxon>Rhabditoidea</taxon>
        <taxon>Rhabditidae</taxon>
        <taxon>Peloderinae</taxon>
        <taxon>Caenorhabditis</taxon>
    </lineage>
</organism>